<gene>
    <name evidence="1" type="primary">pdxJ</name>
    <name type="ordered locus">HPAG1_1530</name>
</gene>
<comment type="function">
    <text evidence="1">Catalyzes the complicated ring closure reaction between the two acyclic compounds 1-deoxy-D-xylulose-5-phosphate (DXP) and 3-amino-2-oxopropyl phosphate (1-amino-acetone-3-phosphate or AAP) to form pyridoxine 5'-phosphate (PNP) and inorganic phosphate.</text>
</comment>
<comment type="catalytic activity">
    <reaction evidence="1">
        <text>3-amino-2-oxopropyl phosphate + 1-deoxy-D-xylulose 5-phosphate = pyridoxine 5'-phosphate + phosphate + 2 H2O + H(+)</text>
        <dbReference type="Rhea" id="RHEA:15265"/>
        <dbReference type="ChEBI" id="CHEBI:15377"/>
        <dbReference type="ChEBI" id="CHEBI:15378"/>
        <dbReference type="ChEBI" id="CHEBI:43474"/>
        <dbReference type="ChEBI" id="CHEBI:57279"/>
        <dbReference type="ChEBI" id="CHEBI:57792"/>
        <dbReference type="ChEBI" id="CHEBI:58589"/>
        <dbReference type="EC" id="2.6.99.2"/>
    </reaction>
</comment>
<comment type="pathway">
    <text evidence="1">Cofactor biosynthesis; pyridoxine 5'-phosphate biosynthesis; pyridoxine 5'-phosphate from D-erythrose 4-phosphate: step 5/5.</text>
</comment>
<comment type="subunit">
    <text evidence="1">Homooctamer; tetramer of dimers.</text>
</comment>
<comment type="subcellular location">
    <subcellularLocation>
        <location evidence="1">Cytoplasm</location>
    </subcellularLocation>
</comment>
<comment type="similarity">
    <text evidence="1">Belongs to the PNP synthase family.</text>
</comment>
<feature type="chain" id="PRO_1000022375" description="Pyridoxine 5'-phosphate synthase">
    <location>
        <begin position="1"/>
        <end position="262"/>
    </location>
</feature>
<feature type="active site" description="Proton acceptor" evidence="1">
    <location>
        <position position="43"/>
    </location>
</feature>
<feature type="active site" description="Proton acceptor" evidence="1">
    <location>
        <position position="70"/>
    </location>
</feature>
<feature type="active site" description="Proton donor" evidence="1">
    <location>
        <position position="215"/>
    </location>
</feature>
<feature type="binding site" evidence="1">
    <location>
        <position position="6"/>
    </location>
    <ligand>
        <name>3-amino-2-oxopropyl phosphate</name>
        <dbReference type="ChEBI" id="CHEBI:57279"/>
    </ligand>
</feature>
<feature type="binding site" evidence="1">
    <location>
        <begin position="8"/>
        <end position="9"/>
    </location>
    <ligand>
        <name>1-deoxy-D-xylulose 5-phosphate</name>
        <dbReference type="ChEBI" id="CHEBI:57792"/>
    </ligand>
</feature>
<feature type="binding site" evidence="1">
    <location>
        <position position="17"/>
    </location>
    <ligand>
        <name>3-amino-2-oxopropyl phosphate</name>
        <dbReference type="ChEBI" id="CHEBI:57279"/>
    </ligand>
</feature>
<feature type="binding site" evidence="1">
    <location>
        <position position="45"/>
    </location>
    <ligand>
        <name>1-deoxy-D-xylulose 5-phosphate</name>
        <dbReference type="ChEBI" id="CHEBI:57792"/>
    </ligand>
</feature>
<feature type="binding site" evidence="1">
    <location>
        <position position="50"/>
    </location>
    <ligand>
        <name>1-deoxy-D-xylulose 5-phosphate</name>
        <dbReference type="ChEBI" id="CHEBI:57792"/>
    </ligand>
</feature>
<feature type="binding site" evidence="1">
    <location>
        <position position="102"/>
    </location>
    <ligand>
        <name>1-deoxy-D-xylulose 5-phosphate</name>
        <dbReference type="ChEBI" id="CHEBI:57792"/>
    </ligand>
</feature>
<feature type="binding site" evidence="1">
    <location>
        <position position="216"/>
    </location>
    <ligand>
        <name>3-amino-2-oxopropyl phosphate</name>
        <dbReference type="ChEBI" id="CHEBI:57279"/>
    </ligand>
</feature>
<feature type="binding site" evidence="1">
    <location>
        <begin position="237"/>
        <end position="238"/>
    </location>
    <ligand>
        <name>3-amino-2-oxopropyl phosphate</name>
        <dbReference type="ChEBI" id="CHEBI:57279"/>
    </ligand>
</feature>
<feature type="site" description="Transition state stabilizer" evidence="1">
    <location>
        <position position="151"/>
    </location>
</feature>
<accession>Q1CR25</accession>
<protein>
    <recommendedName>
        <fullName evidence="1">Pyridoxine 5'-phosphate synthase</fullName>
        <shortName evidence="1">PNP synthase</shortName>
        <ecNumber evidence="1">2.6.99.2</ecNumber>
    </recommendedName>
</protein>
<evidence type="ECO:0000255" key="1">
    <source>
        <dbReference type="HAMAP-Rule" id="MF_00279"/>
    </source>
</evidence>
<sequence>MRFGLNIDHIVTLREIRKTYEPEILEALFIAKNTHKVDLITIHLREDKRHIQNEDVLRLLEISPLPINIECSINVAITDFLCSLKNKPSKVTIVPENRNEVTTEGGLDCSLKGLGEVIRAYHNKGIEVSLFVDPLKDALHFAKEHQVKQVEFHTGVYANLHNALYSNANNQIHAISALKDKCPKELKEELHNAFLQLRRMSKEAFFMGIVVCAGHGLNYTNVKELLKIPSLRELNIGHSVVSKAVLVGLEKAILEMAQLIKR</sequence>
<organism>
    <name type="scientific">Helicobacter pylori (strain HPAG1)</name>
    <dbReference type="NCBI Taxonomy" id="357544"/>
    <lineage>
        <taxon>Bacteria</taxon>
        <taxon>Pseudomonadati</taxon>
        <taxon>Campylobacterota</taxon>
        <taxon>Epsilonproteobacteria</taxon>
        <taxon>Campylobacterales</taxon>
        <taxon>Helicobacteraceae</taxon>
        <taxon>Helicobacter</taxon>
    </lineage>
</organism>
<name>PDXJ_HELPH</name>
<proteinExistence type="inferred from homology"/>
<reference key="1">
    <citation type="journal article" date="2006" name="Proc. Natl. Acad. Sci. U.S.A.">
        <title>The complete genome sequence of a chronic atrophic gastritis Helicobacter pylori strain: evolution during disease progression.</title>
        <authorList>
            <person name="Oh J.D."/>
            <person name="Kling-Baeckhed H."/>
            <person name="Giannakis M."/>
            <person name="Xu J."/>
            <person name="Fulton R.S."/>
            <person name="Fulton L.A."/>
            <person name="Cordum H.S."/>
            <person name="Wang C."/>
            <person name="Elliott G."/>
            <person name="Edwards J."/>
            <person name="Mardis E.R."/>
            <person name="Engstrand L.G."/>
            <person name="Gordon J.I."/>
        </authorList>
    </citation>
    <scope>NUCLEOTIDE SEQUENCE [LARGE SCALE GENOMIC DNA]</scope>
    <source>
        <strain>HPAG1</strain>
    </source>
</reference>
<keyword id="KW-0963">Cytoplasm</keyword>
<keyword id="KW-0664">Pyridoxine biosynthesis</keyword>
<keyword id="KW-0808">Transferase</keyword>
<dbReference type="EC" id="2.6.99.2" evidence="1"/>
<dbReference type="EMBL" id="CP000241">
    <property type="protein sequence ID" value="ABF85597.1"/>
    <property type="molecule type" value="Genomic_DNA"/>
</dbReference>
<dbReference type="RefSeq" id="WP_001210844.1">
    <property type="nucleotide sequence ID" value="NC_008086.1"/>
</dbReference>
<dbReference type="SMR" id="Q1CR25"/>
<dbReference type="KEGG" id="hpa:HPAG1_1530"/>
<dbReference type="HOGENOM" id="CLU_074563_0_0_7"/>
<dbReference type="UniPathway" id="UPA00244">
    <property type="reaction ID" value="UER00313"/>
</dbReference>
<dbReference type="GO" id="GO:0005829">
    <property type="term" value="C:cytosol"/>
    <property type="evidence" value="ECO:0007669"/>
    <property type="project" value="TreeGrafter"/>
</dbReference>
<dbReference type="GO" id="GO:0033856">
    <property type="term" value="F:pyridoxine 5'-phosphate synthase activity"/>
    <property type="evidence" value="ECO:0007669"/>
    <property type="project" value="UniProtKB-EC"/>
</dbReference>
<dbReference type="GO" id="GO:0008615">
    <property type="term" value="P:pyridoxine biosynthetic process"/>
    <property type="evidence" value="ECO:0007669"/>
    <property type="project" value="UniProtKB-UniRule"/>
</dbReference>
<dbReference type="FunFam" id="3.20.20.70:FF:000264">
    <property type="entry name" value="Pyridoxine 5'-phosphate synthase"/>
    <property type="match status" value="1"/>
</dbReference>
<dbReference type="Gene3D" id="3.20.20.70">
    <property type="entry name" value="Aldolase class I"/>
    <property type="match status" value="1"/>
</dbReference>
<dbReference type="HAMAP" id="MF_00279">
    <property type="entry name" value="PdxJ"/>
    <property type="match status" value="1"/>
</dbReference>
<dbReference type="InterPro" id="IPR013785">
    <property type="entry name" value="Aldolase_TIM"/>
</dbReference>
<dbReference type="InterPro" id="IPR004569">
    <property type="entry name" value="PyrdxlP_synth_PdxJ"/>
</dbReference>
<dbReference type="InterPro" id="IPR036130">
    <property type="entry name" value="Pyridoxine-5'_phos_synth"/>
</dbReference>
<dbReference type="NCBIfam" id="TIGR00559">
    <property type="entry name" value="pdxJ"/>
    <property type="match status" value="1"/>
</dbReference>
<dbReference type="NCBIfam" id="NF003625">
    <property type="entry name" value="PRK05265.1-3"/>
    <property type="match status" value="1"/>
</dbReference>
<dbReference type="NCBIfam" id="NF003627">
    <property type="entry name" value="PRK05265.1-5"/>
    <property type="match status" value="1"/>
</dbReference>
<dbReference type="PANTHER" id="PTHR30456">
    <property type="entry name" value="PYRIDOXINE 5'-PHOSPHATE SYNTHASE"/>
    <property type="match status" value="1"/>
</dbReference>
<dbReference type="PANTHER" id="PTHR30456:SF0">
    <property type="entry name" value="PYRIDOXINE 5'-PHOSPHATE SYNTHASE"/>
    <property type="match status" value="1"/>
</dbReference>
<dbReference type="Pfam" id="PF03740">
    <property type="entry name" value="PdxJ"/>
    <property type="match status" value="1"/>
</dbReference>
<dbReference type="SUPFAM" id="SSF63892">
    <property type="entry name" value="Pyridoxine 5'-phosphate synthase"/>
    <property type="match status" value="1"/>
</dbReference>